<feature type="chain" id="PRO_0000328312" description="Inorganic pyrophosphatase">
    <location>
        <begin position="1"/>
        <end position="279"/>
    </location>
</feature>
<feature type="binding site" evidence="1">
    <location>
        <position position="100"/>
    </location>
    <ligand>
        <name>diphosphate</name>
        <dbReference type="ChEBI" id="CHEBI:33019"/>
    </ligand>
</feature>
<feature type="binding site" evidence="1">
    <location>
        <position position="132"/>
    </location>
    <ligand>
        <name>Mg(2+)</name>
        <dbReference type="ChEBI" id="CHEBI:18420"/>
        <label>1</label>
    </ligand>
</feature>
<feature type="binding site" evidence="1">
    <location>
        <position position="137"/>
    </location>
    <ligand>
        <name>Mg(2+)</name>
        <dbReference type="ChEBI" id="CHEBI:18420"/>
        <label>1</label>
    </ligand>
</feature>
<feature type="binding site" evidence="1">
    <location>
        <position position="137"/>
    </location>
    <ligand>
        <name>Mg(2+)</name>
        <dbReference type="ChEBI" id="CHEBI:18420"/>
        <label>2</label>
    </ligand>
</feature>
<feature type="binding site" evidence="1">
    <location>
        <position position="169"/>
    </location>
    <ligand>
        <name>Mg(2+)</name>
        <dbReference type="ChEBI" id="CHEBI:18420"/>
        <label>1</label>
    </ligand>
</feature>
<evidence type="ECO:0000250" key="1"/>
<evidence type="ECO:0000305" key="2"/>
<protein>
    <recommendedName>
        <fullName>Inorganic pyrophosphatase</fullName>
        <ecNumber>3.6.1.1</ecNumber>
    </recommendedName>
    <alternativeName>
        <fullName>Pyrophosphate phospho-hydrolase</fullName>
        <shortName>PPase</shortName>
    </alternativeName>
</protein>
<gene>
    <name type="primary">ppa1</name>
    <name type="ORF">DDB_G0284265</name>
</gene>
<keyword id="KW-0378">Hydrolase</keyword>
<keyword id="KW-0460">Magnesium</keyword>
<keyword id="KW-0479">Metal-binding</keyword>
<keyword id="KW-1185">Reference proteome</keyword>
<sequence>MKNFFSFSKLTPHLKNIYHRNMTYTTKQVGETGSLEYRLFFLKDNKPVSSFHDVPLWVNKEKQIVNMLVEIPRGTNAKLEIATKEYMNPIKQDVKDGKLRFVHDKYPFNYGALPQTWESPEHTHPSTGAKGDNDPLDACEIGSGQGVTGEFKQVKVLGVFAMIDAGETDWKILCIDVNDPIASQINSQEDIEKHLPGKINEVYTFLRDYKIPDGKGPNQFAFDGKLQSIDFSMKIIEETEAEWKDLVGGKTKSSLSVVNTTLNDSNTVTADVAAQKLNF</sequence>
<name>IPYR_DICDI</name>
<proteinExistence type="evidence at protein level"/>
<dbReference type="EC" id="3.6.1.1"/>
<dbReference type="EMBL" id="AAFI02000064">
    <property type="protein sequence ID" value="EAL65321.1"/>
    <property type="molecule type" value="Genomic_DNA"/>
</dbReference>
<dbReference type="RefSeq" id="XP_638687.1">
    <property type="nucleotide sequence ID" value="XM_633595.1"/>
</dbReference>
<dbReference type="SMR" id="Q54PV8"/>
<dbReference type="FunCoup" id="Q54PV8">
    <property type="interactions" value="694"/>
</dbReference>
<dbReference type="STRING" id="44689.Q54PV8"/>
<dbReference type="PaxDb" id="44689-DDB0233791"/>
<dbReference type="EnsemblProtists" id="EAL65321">
    <property type="protein sequence ID" value="EAL65321"/>
    <property type="gene ID" value="DDB_G0284265"/>
</dbReference>
<dbReference type="GeneID" id="8624517"/>
<dbReference type="KEGG" id="ddi:DDB_G0284265"/>
<dbReference type="dictyBase" id="DDB_G0284265">
    <property type="gene designation" value="ppa1"/>
</dbReference>
<dbReference type="VEuPathDB" id="AmoebaDB:DDB_G0284265"/>
<dbReference type="eggNOG" id="KOG1626">
    <property type="taxonomic scope" value="Eukaryota"/>
</dbReference>
<dbReference type="HOGENOM" id="CLU_040684_0_0_1"/>
<dbReference type="InParanoid" id="Q54PV8"/>
<dbReference type="OMA" id="GVWAMID"/>
<dbReference type="PhylomeDB" id="Q54PV8"/>
<dbReference type="Reactome" id="R-DDI-379716">
    <property type="pathway name" value="Cytosolic tRNA aminoacylation"/>
</dbReference>
<dbReference type="Reactome" id="R-DDI-379726">
    <property type="pathway name" value="Mitochondrial tRNA aminoacylation"/>
</dbReference>
<dbReference type="Reactome" id="R-DDI-71737">
    <property type="pathway name" value="Pyrophosphate hydrolysis"/>
</dbReference>
<dbReference type="PRO" id="PR:Q54PV8"/>
<dbReference type="Proteomes" id="UP000002195">
    <property type="component" value="Chromosome 4"/>
</dbReference>
<dbReference type="GO" id="GO:0045335">
    <property type="term" value="C:phagocytic vesicle"/>
    <property type="evidence" value="ECO:0007005"/>
    <property type="project" value="dictyBase"/>
</dbReference>
<dbReference type="GO" id="GO:0004427">
    <property type="term" value="F:inorganic diphosphate phosphatase activity"/>
    <property type="evidence" value="ECO:0000250"/>
    <property type="project" value="dictyBase"/>
</dbReference>
<dbReference type="GO" id="GO:0000287">
    <property type="term" value="F:magnesium ion binding"/>
    <property type="evidence" value="ECO:0007669"/>
    <property type="project" value="InterPro"/>
</dbReference>
<dbReference type="GO" id="GO:0006796">
    <property type="term" value="P:phosphate-containing compound metabolic process"/>
    <property type="evidence" value="ECO:0000318"/>
    <property type="project" value="GO_Central"/>
</dbReference>
<dbReference type="CDD" id="cd00412">
    <property type="entry name" value="pyrophosphatase"/>
    <property type="match status" value="1"/>
</dbReference>
<dbReference type="FunFam" id="3.90.80.10:FF:000009">
    <property type="entry name" value="Inorganic pyrophosphatase"/>
    <property type="match status" value="1"/>
</dbReference>
<dbReference type="Gene3D" id="3.90.80.10">
    <property type="entry name" value="Inorganic pyrophosphatase"/>
    <property type="match status" value="1"/>
</dbReference>
<dbReference type="InterPro" id="IPR008162">
    <property type="entry name" value="Pyrophosphatase"/>
</dbReference>
<dbReference type="InterPro" id="IPR036649">
    <property type="entry name" value="Pyrophosphatase_sf"/>
</dbReference>
<dbReference type="PANTHER" id="PTHR10286">
    <property type="entry name" value="INORGANIC PYROPHOSPHATASE"/>
    <property type="match status" value="1"/>
</dbReference>
<dbReference type="Pfam" id="PF00719">
    <property type="entry name" value="Pyrophosphatase"/>
    <property type="match status" value="1"/>
</dbReference>
<dbReference type="SUPFAM" id="SSF50324">
    <property type="entry name" value="Inorganic pyrophosphatase"/>
    <property type="match status" value="1"/>
</dbReference>
<dbReference type="PROSITE" id="PS00387">
    <property type="entry name" value="PPASE"/>
    <property type="match status" value="1"/>
</dbReference>
<comment type="catalytic activity">
    <reaction>
        <text>diphosphate + H2O = 2 phosphate + H(+)</text>
        <dbReference type="Rhea" id="RHEA:24576"/>
        <dbReference type="ChEBI" id="CHEBI:15377"/>
        <dbReference type="ChEBI" id="CHEBI:15378"/>
        <dbReference type="ChEBI" id="CHEBI:33019"/>
        <dbReference type="ChEBI" id="CHEBI:43474"/>
        <dbReference type="EC" id="3.6.1.1"/>
    </reaction>
</comment>
<comment type="cofactor">
    <cofactor evidence="1">
        <name>Mg(2+)</name>
        <dbReference type="ChEBI" id="CHEBI:18420"/>
    </cofactor>
</comment>
<comment type="similarity">
    <text evidence="2">Belongs to the PPase family.</text>
</comment>
<organism>
    <name type="scientific">Dictyostelium discoideum</name>
    <name type="common">Social amoeba</name>
    <dbReference type="NCBI Taxonomy" id="44689"/>
    <lineage>
        <taxon>Eukaryota</taxon>
        <taxon>Amoebozoa</taxon>
        <taxon>Evosea</taxon>
        <taxon>Eumycetozoa</taxon>
        <taxon>Dictyostelia</taxon>
        <taxon>Dictyosteliales</taxon>
        <taxon>Dictyosteliaceae</taxon>
        <taxon>Dictyostelium</taxon>
    </lineage>
</organism>
<accession>Q54PV8</accession>
<reference key="1">
    <citation type="journal article" date="2005" name="Nature">
        <title>The genome of the social amoeba Dictyostelium discoideum.</title>
        <authorList>
            <person name="Eichinger L."/>
            <person name="Pachebat J.A."/>
            <person name="Gloeckner G."/>
            <person name="Rajandream M.A."/>
            <person name="Sucgang R."/>
            <person name="Berriman M."/>
            <person name="Song J."/>
            <person name="Olsen R."/>
            <person name="Szafranski K."/>
            <person name="Xu Q."/>
            <person name="Tunggal B."/>
            <person name="Kummerfeld S."/>
            <person name="Madera M."/>
            <person name="Konfortov B.A."/>
            <person name="Rivero F."/>
            <person name="Bankier A.T."/>
            <person name="Lehmann R."/>
            <person name="Hamlin N."/>
            <person name="Davies R."/>
            <person name="Gaudet P."/>
            <person name="Fey P."/>
            <person name="Pilcher K."/>
            <person name="Chen G."/>
            <person name="Saunders D."/>
            <person name="Sodergren E.J."/>
            <person name="Davis P."/>
            <person name="Kerhornou A."/>
            <person name="Nie X."/>
            <person name="Hall N."/>
            <person name="Anjard C."/>
            <person name="Hemphill L."/>
            <person name="Bason N."/>
            <person name="Farbrother P."/>
            <person name="Desany B."/>
            <person name="Just E."/>
            <person name="Morio T."/>
            <person name="Rost R."/>
            <person name="Churcher C.M."/>
            <person name="Cooper J."/>
            <person name="Haydock S."/>
            <person name="van Driessche N."/>
            <person name="Cronin A."/>
            <person name="Goodhead I."/>
            <person name="Muzny D.M."/>
            <person name="Mourier T."/>
            <person name="Pain A."/>
            <person name="Lu M."/>
            <person name="Harper D."/>
            <person name="Lindsay R."/>
            <person name="Hauser H."/>
            <person name="James K.D."/>
            <person name="Quiles M."/>
            <person name="Madan Babu M."/>
            <person name="Saito T."/>
            <person name="Buchrieser C."/>
            <person name="Wardroper A."/>
            <person name="Felder M."/>
            <person name="Thangavelu M."/>
            <person name="Johnson D."/>
            <person name="Knights A."/>
            <person name="Loulseged H."/>
            <person name="Mungall K.L."/>
            <person name="Oliver K."/>
            <person name="Price C."/>
            <person name="Quail M.A."/>
            <person name="Urushihara H."/>
            <person name="Hernandez J."/>
            <person name="Rabbinowitsch E."/>
            <person name="Steffen D."/>
            <person name="Sanders M."/>
            <person name="Ma J."/>
            <person name="Kohara Y."/>
            <person name="Sharp S."/>
            <person name="Simmonds M.N."/>
            <person name="Spiegler S."/>
            <person name="Tivey A."/>
            <person name="Sugano S."/>
            <person name="White B."/>
            <person name="Walker D."/>
            <person name="Woodward J.R."/>
            <person name="Winckler T."/>
            <person name="Tanaka Y."/>
            <person name="Shaulsky G."/>
            <person name="Schleicher M."/>
            <person name="Weinstock G.M."/>
            <person name="Rosenthal A."/>
            <person name="Cox E.C."/>
            <person name="Chisholm R.L."/>
            <person name="Gibbs R.A."/>
            <person name="Loomis W.F."/>
            <person name="Platzer M."/>
            <person name="Kay R.R."/>
            <person name="Williams J.G."/>
            <person name="Dear P.H."/>
            <person name="Noegel A.A."/>
            <person name="Barrell B.G."/>
            <person name="Kuspa A."/>
        </authorList>
    </citation>
    <scope>NUCLEOTIDE SEQUENCE [LARGE SCALE GENOMIC DNA]</scope>
    <source>
        <strain>AX4</strain>
    </source>
</reference>
<reference key="2">
    <citation type="journal article" date="2006" name="Mol. Cell. Proteomics">
        <title>Proteomics fingerprinting of phagosome maturation and evidence for the role of a Galpha during uptake.</title>
        <authorList>
            <person name="Gotthardt D."/>
            <person name="Blancheteau V."/>
            <person name="Bosserhoff A."/>
            <person name="Ruppert T."/>
            <person name="Delorenzi M."/>
            <person name="Soldati T."/>
        </authorList>
    </citation>
    <scope>IDENTIFICATION BY MASS SPECTROMETRY [LARGE SCALE ANALYSIS]</scope>
    <source>
        <strain>AX2</strain>
    </source>
</reference>